<feature type="signal peptide" evidence="1">
    <location>
        <begin position="1"/>
        <end position="27"/>
    </location>
</feature>
<feature type="chain" id="PRO_0000034221" description="ER-retained PMA1-suppressing protein 1">
    <location>
        <begin position="28"/>
        <end position="701"/>
    </location>
</feature>
<feature type="transmembrane region" description="Helical" evidence="1">
    <location>
        <begin position="646"/>
        <end position="666"/>
    </location>
</feature>
<feature type="domain" description="Thioredoxin 1" evidence="2">
    <location>
        <begin position="28"/>
        <end position="142"/>
    </location>
</feature>
<feature type="domain" description="Thioredoxin 2" evidence="2">
    <location>
        <begin position="408"/>
        <end position="446"/>
    </location>
</feature>
<feature type="glycosylation site" description="N-linked (GlcNAc...) asparagine" evidence="1">
    <location>
        <position position="85"/>
    </location>
</feature>
<feature type="glycosylation site" description="N-linked (GlcNAc...) asparagine" evidence="1">
    <location>
        <position position="264"/>
    </location>
</feature>
<feature type="glycosylation site" description="N-linked (GlcNAc...) asparagine" evidence="1">
    <location>
        <position position="299"/>
    </location>
</feature>
<feature type="glycosylation site" description="N-linked (GlcNAc...) asparagine" evidence="1">
    <location>
        <position position="370"/>
    </location>
</feature>
<feature type="disulfide bond" description="Redox-active" evidence="2">
    <location>
        <begin position="60"/>
        <end position="63"/>
    </location>
</feature>
<feature type="disulfide bond" description="Redox-active" evidence="2">
    <location>
        <begin position="200"/>
        <end position="203"/>
    </location>
</feature>
<protein>
    <recommendedName>
        <fullName>ER-retained PMA1-suppressing protein 1</fullName>
        <ecNumber>5.3.4.1</ecNumber>
    </recommendedName>
</protein>
<accession>P40557</accession>
<accession>D6VVS5</accession>
<reference key="1">
    <citation type="journal article" date="1997" name="Nature">
        <title>The nucleotide sequence of Saccharomyces cerevisiae chromosome IX.</title>
        <authorList>
            <person name="Churcher C.M."/>
            <person name="Bowman S."/>
            <person name="Badcock K."/>
            <person name="Bankier A.T."/>
            <person name="Brown D."/>
            <person name="Chillingworth T."/>
            <person name="Connor R."/>
            <person name="Devlin K."/>
            <person name="Gentles S."/>
            <person name="Hamlin N."/>
            <person name="Harris D.E."/>
            <person name="Horsnell T."/>
            <person name="Hunt S."/>
            <person name="Jagels K."/>
            <person name="Jones M."/>
            <person name="Lye G."/>
            <person name="Moule S."/>
            <person name="Odell C."/>
            <person name="Pearson D."/>
            <person name="Rajandream M.A."/>
            <person name="Rice P."/>
            <person name="Rowley N."/>
            <person name="Skelton J."/>
            <person name="Smith V."/>
            <person name="Walsh S.V."/>
            <person name="Whitehead S."/>
            <person name="Barrell B.G."/>
        </authorList>
    </citation>
    <scope>NUCLEOTIDE SEQUENCE [LARGE SCALE GENOMIC DNA]</scope>
    <source>
        <strain>ATCC 204508 / S288c</strain>
    </source>
</reference>
<reference key="2">
    <citation type="journal article" date="2014" name="G3 (Bethesda)">
        <title>The reference genome sequence of Saccharomyces cerevisiae: Then and now.</title>
        <authorList>
            <person name="Engel S.R."/>
            <person name="Dietrich F.S."/>
            <person name="Fisk D.G."/>
            <person name="Binkley G."/>
            <person name="Balakrishnan R."/>
            <person name="Costanzo M.C."/>
            <person name="Dwight S.S."/>
            <person name="Hitz B.C."/>
            <person name="Karra K."/>
            <person name="Nash R.S."/>
            <person name="Weng S."/>
            <person name="Wong E.D."/>
            <person name="Lloyd P."/>
            <person name="Skrzypek M.S."/>
            <person name="Miyasato S.R."/>
            <person name="Simison M."/>
            <person name="Cherry J.M."/>
        </authorList>
    </citation>
    <scope>GENOME REANNOTATION</scope>
    <source>
        <strain>ATCC 204508 / S288c</strain>
    </source>
</reference>
<reference key="3">
    <citation type="journal article" date="2007" name="Genome Res.">
        <title>Approaching a complete repository of sequence-verified protein-encoding clones for Saccharomyces cerevisiae.</title>
        <authorList>
            <person name="Hu Y."/>
            <person name="Rolfs A."/>
            <person name="Bhullar B."/>
            <person name="Murthy T.V.S."/>
            <person name="Zhu C."/>
            <person name="Berger M.F."/>
            <person name="Camargo A.A."/>
            <person name="Kelley F."/>
            <person name="McCarron S."/>
            <person name="Jepson D."/>
            <person name="Richardson A."/>
            <person name="Raphael J."/>
            <person name="Moreira D."/>
            <person name="Taycher E."/>
            <person name="Zuo D."/>
            <person name="Mohr S."/>
            <person name="Kane M.F."/>
            <person name="Williamson J."/>
            <person name="Simpson A.J.G."/>
            <person name="Bulyk M.L."/>
            <person name="Harlow E."/>
            <person name="Marsischky G."/>
            <person name="Kolodner R.D."/>
            <person name="LaBaer J."/>
        </authorList>
    </citation>
    <scope>NUCLEOTIDE SEQUENCE [GENOMIC DNA]</scope>
    <source>
        <strain>ATCC 204508 / S288c</strain>
    </source>
</reference>
<reference key="4">
    <citation type="journal article" date="1995" name="Yeast">
        <title>Nucleotide sequence and analysis of the centromeric region of yeast chromosome IX.</title>
        <authorList>
            <person name="Voss H."/>
            <person name="Tamames J."/>
            <person name="Teodoru C."/>
            <person name="Valencia A."/>
            <person name="Sensen C."/>
            <person name="Wiemann S."/>
            <person name="Schwager C."/>
            <person name="Zimmermann J."/>
            <person name="Sander C."/>
            <person name="Ansorge W."/>
        </authorList>
    </citation>
    <scope>NUCLEOTIDE SEQUENCE [GENOMIC DNA] OF 549-701</scope>
    <source>
        <strain>ATCC 204508 / S288c</strain>
    </source>
</reference>
<reference key="5">
    <citation type="journal article" date="1999" name="EMBO J.">
        <title>Eps1, a novel PDI-related protein involved in ER quality control in yeast.</title>
        <authorList>
            <person name="Wang Q."/>
            <person name="Chang A."/>
        </authorList>
    </citation>
    <scope>FUNCTION</scope>
    <scope>SUBCELLULAR LOCATION</scope>
</reference>
<reference key="6">
    <citation type="journal article" date="2003" name="EMBO J.">
        <title>Substrate recognition in ER-associated degradation mediated by Eps1, a member of the protein disulfide isomerase family.</title>
        <authorList>
            <person name="Wang Q."/>
            <person name="Chang A."/>
        </authorList>
    </citation>
    <scope>FUNCTION</scope>
    <scope>SUBCELLULAR LOCATION</scope>
    <scope>INTERACTION WITH PMA1</scope>
</reference>
<reference key="7">
    <citation type="journal article" date="2003" name="Nature">
        <title>Global analysis of protein expression in yeast.</title>
        <authorList>
            <person name="Ghaemmaghami S."/>
            <person name="Huh W.-K."/>
            <person name="Bower K."/>
            <person name="Howson R.W."/>
            <person name="Belle A."/>
            <person name="Dephoure N."/>
            <person name="O'Shea E.K."/>
            <person name="Weissman J.S."/>
        </authorList>
    </citation>
    <scope>LEVEL OF PROTEIN EXPRESSION [LARGE SCALE ANALYSIS]</scope>
</reference>
<reference key="8">
    <citation type="journal article" date="2005" name="FEBS Lett.">
        <title>Effect of EPS1 gene deletion in Saccharomyces cerevisiae on the secretion of foreign proteins which have disulfide bridges.</title>
        <authorList>
            <person name="He J."/>
            <person name="Sakamoto T."/>
            <person name="Song Y."/>
            <person name="Saito A."/>
            <person name="Harada A."/>
            <person name="Azakami H."/>
            <person name="Kato A."/>
        </authorList>
    </citation>
    <scope>FUNCTION</scope>
</reference>
<reference key="9">
    <citation type="journal article" date="2005" name="J. Biol. Chem.">
        <title>Interactions among yeast protein-disulfide isomerase proteins and endoplasmic reticulum chaperone proteins influence their activities.</title>
        <authorList>
            <person name="Kimura T."/>
            <person name="Hosoda Y."/>
            <person name="Sato Y."/>
            <person name="Kitamura Y."/>
            <person name="Ikeda T."/>
            <person name="Horibe T."/>
            <person name="Kikuchi M."/>
        </authorList>
    </citation>
    <scope>INTERACTION WITH EUG1; KAR2; MPD1 AND PDI1</scope>
</reference>
<dbReference type="EC" id="5.3.4.1"/>
<dbReference type="EMBL" id="Z38113">
    <property type="protein sequence ID" value="CAA86246.1"/>
    <property type="molecule type" value="Genomic_DNA"/>
</dbReference>
<dbReference type="EMBL" id="AY723829">
    <property type="protein sequence ID" value="AAU09746.1"/>
    <property type="molecule type" value="Genomic_DNA"/>
</dbReference>
<dbReference type="EMBL" id="X79743">
    <property type="status" value="NOT_ANNOTATED_CDS"/>
    <property type="molecule type" value="Genomic_DNA"/>
</dbReference>
<dbReference type="EMBL" id="BK006942">
    <property type="protein sequence ID" value="DAA08541.1"/>
    <property type="molecule type" value="Genomic_DNA"/>
</dbReference>
<dbReference type="PIR" id="S48452">
    <property type="entry name" value="S48452"/>
</dbReference>
<dbReference type="RefSeq" id="NP_012261.1">
    <property type="nucleotide sequence ID" value="NM_001179355.1"/>
</dbReference>
<dbReference type="SMR" id="P40557"/>
<dbReference type="BioGRID" id="34987">
    <property type="interactions" value="105"/>
</dbReference>
<dbReference type="DIP" id="DIP-3860N"/>
<dbReference type="FunCoup" id="P40557">
    <property type="interactions" value="158"/>
</dbReference>
<dbReference type="IntAct" id="P40557">
    <property type="interactions" value="30"/>
</dbReference>
<dbReference type="MINT" id="P40557"/>
<dbReference type="STRING" id="4932.YIL005W"/>
<dbReference type="GlyCosmos" id="P40557">
    <property type="glycosylation" value="4 sites, No reported glycans"/>
</dbReference>
<dbReference type="GlyGen" id="P40557">
    <property type="glycosylation" value="4 sites"/>
</dbReference>
<dbReference type="iPTMnet" id="P40557"/>
<dbReference type="PaxDb" id="4932-YIL005W"/>
<dbReference type="PeptideAtlas" id="P40557"/>
<dbReference type="EnsemblFungi" id="YIL005W_mRNA">
    <property type="protein sequence ID" value="YIL005W"/>
    <property type="gene ID" value="YIL005W"/>
</dbReference>
<dbReference type="GeneID" id="854812"/>
<dbReference type="KEGG" id="sce:YIL005W"/>
<dbReference type="AGR" id="SGD:S000001267"/>
<dbReference type="SGD" id="S000001267">
    <property type="gene designation" value="EPS1"/>
</dbReference>
<dbReference type="VEuPathDB" id="FungiDB:YIL005W"/>
<dbReference type="eggNOG" id="KOG0191">
    <property type="taxonomic scope" value="Eukaryota"/>
</dbReference>
<dbReference type="HOGENOM" id="CLU_024937_0_0_1"/>
<dbReference type="InParanoid" id="P40557"/>
<dbReference type="OMA" id="RQVNCVE"/>
<dbReference type="OrthoDB" id="72053at2759"/>
<dbReference type="BioCyc" id="YEAST:G3O-31284-MONOMER"/>
<dbReference type="Reactome" id="R-SCE-6798695">
    <property type="pathway name" value="Neutrophil degranulation"/>
</dbReference>
<dbReference type="BioGRID-ORCS" id="854812">
    <property type="hits" value="1 hit in 10 CRISPR screens"/>
</dbReference>
<dbReference type="PRO" id="PR:P40557"/>
<dbReference type="Proteomes" id="UP000002311">
    <property type="component" value="Chromosome IX"/>
</dbReference>
<dbReference type="RNAct" id="P40557">
    <property type="molecule type" value="protein"/>
</dbReference>
<dbReference type="GO" id="GO:0005783">
    <property type="term" value="C:endoplasmic reticulum"/>
    <property type="evidence" value="ECO:0000318"/>
    <property type="project" value="GO_Central"/>
</dbReference>
<dbReference type="GO" id="GO:0005789">
    <property type="term" value="C:endoplasmic reticulum membrane"/>
    <property type="evidence" value="ECO:0000314"/>
    <property type="project" value="SGD"/>
</dbReference>
<dbReference type="GO" id="GO:0003756">
    <property type="term" value="F:protein disulfide isomerase activity"/>
    <property type="evidence" value="ECO:0000315"/>
    <property type="project" value="SGD"/>
</dbReference>
<dbReference type="GO" id="GO:0019153">
    <property type="term" value="F:protein-disulfide reductase (glutathione) activity"/>
    <property type="evidence" value="ECO:0000314"/>
    <property type="project" value="SGD"/>
</dbReference>
<dbReference type="GO" id="GO:0051082">
    <property type="term" value="F:unfolded protein binding"/>
    <property type="evidence" value="ECO:0000314"/>
    <property type="project" value="SGD"/>
</dbReference>
<dbReference type="GO" id="GO:0036503">
    <property type="term" value="P:ERAD pathway"/>
    <property type="evidence" value="ECO:0000315"/>
    <property type="project" value="SGD"/>
</dbReference>
<dbReference type="GO" id="GO:0006457">
    <property type="term" value="P:protein folding"/>
    <property type="evidence" value="ECO:0000318"/>
    <property type="project" value="GO_Central"/>
</dbReference>
<dbReference type="GO" id="GO:0006621">
    <property type="term" value="P:protein retention in ER lumen"/>
    <property type="evidence" value="ECO:0000315"/>
    <property type="project" value="SGD"/>
</dbReference>
<dbReference type="CDD" id="cd02961">
    <property type="entry name" value="PDI_a_family"/>
    <property type="match status" value="1"/>
</dbReference>
<dbReference type="Gene3D" id="3.40.30.10">
    <property type="entry name" value="Glutaredoxin"/>
    <property type="match status" value="2"/>
</dbReference>
<dbReference type="InterPro" id="IPR051063">
    <property type="entry name" value="PDI"/>
</dbReference>
<dbReference type="InterPro" id="IPR036249">
    <property type="entry name" value="Thioredoxin-like_sf"/>
</dbReference>
<dbReference type="InterPro" id="IPR017937">
    <property type="entry name" value="Thioredoxin_CS"/>
</dbReference>
<dbReference type="InterPro" id="IPR013766">
    <property type="entry name" value="Thioredoxin_domain"/>
</dbReference>
<dbReference type="PANTHER" id="PTHR45672">
    <property type="entry name" value="PROTEIN DISULFIDE-ISOMERASE C17H9.14C-RELATED"/>
    <property type="match status" value="1"/>
</dbReference>
<dbReference type="PANTHER" id="PTHR45672:SF3">
    <property type="entry name" value="THIOREDOXIN DOMAIN-CONTAINING PROTEIN 5"/>
    <property type="match status" value="1"/>
</dbReference>
<dbReference type="Pfam" id="PF00085">
    <property type="entry name" value="Thioredoxin"/>
    <property type="match status" value="1"/>
</dbReference>
<dbReference type="SUPFAM" id="SSF52833">
    <property type="entry name" value="Thioredoxin-like"/>
    <property type="match status" value="2"/>
</dbReference>
<dbReference type="PROSITE" id="PS00194">
    <property type="entry name" value="THIOREDOXIN_1"/>
    <property type="match status" value="1"/>
</dbReference>
<dbReference type="PROSITE" id="PS51352">
    <property type="entry name" value="THIOREDOXIN_2"/>
    <property type="match status" value="1"/>
</dbReference>
<sequence length="701" mass="81219">MKMNLKRLVVTFFSCITFLLKFTIAAAEPPEGFPEPLNPTNFKEELSKGLHIIDFYSPYCPHCKHLAPVWMETWEEFKEESKTLNITFSQVNCIESADLCGDENIEYFPEIRLYNPSGYIKSFTETPRTKESLIAFARRESMDPNNLDTDLDSAKSESQYLEGFDFLELIAGKATRPHLVSFWPTKDMKNSDDSLEFKNCDKCHEFQRTWKIISRQLAVDDINTGHVNCESNPTICEELGFGDLVKITNHRADREPKVALVLPNKTSNNLFDYPNGYSAKSDGYVDFARRTFTNSKFPNITEGELEKKANRDIDFLQERGRVTNNDIHLVFSYDPETVVIEDFDILEYLIEPLSKIPNIYLHQIDKNLINLSRNLFGRMYEKINYDASQTQKVFNKEYFTMNTVTQLPTFFMFKDGDPISYVFPGYSTTEMRNIDAIMDWVKKYSNPLVTEVDSSNLKKLISFQTKSYSDLAIQLISSTDHKHIKGSNKLIKNLLLASWEYEHIRMENNFEEINERRARKADGIKKIKEKKAPANKIVDKMREEIPHMDQKKLLLGYLDISKEKNFFRKYGITGEYKIGDVIIIDKSNNYYYNKDNFGNSLTSNNPQLLREAFVSLNIPSKALYSSKLKGRLINSPFHNVLSFLDIIHGNGMPGYLIVIVLFIAILKGPSIYRRYKVRKHYRAKRNAVGILGNMEKKKNQD</sequence>
<name>EPS1_YEAST</name>
<evidence type="ECO:0000255" key="1"/>
<evidence type="ECO:0000255" key="2">
    <source>
        <dbReference type="PROSITE-ProRule" id="PRU00691"/>
    </source>
</evidence>
<evidence type="ECO:0000269" key="3">
    <source>
    </source>
</evidence>
<evidence type="ECO:0000269" key="4">
    <source>
    </source>
</evidence>
<evidence type="ECO:0000269" key="5">
    <source>
    </source>
</evidence>
<evidence type="ECO:0000269" key="6">
    <source>
    </source>
</evidence>
<evidence type="ECO:0000269" key="7">
    <source>
    </source>
</evidence>
<evidence type="ECO:0000305" key="8"/>
<keyword id="KW-0143">Chaperone</keyword>
<keyword id="KW-1015">Disulfide bond</keyword>
<keyword id="KW-0256">Endoplasmic reticulum</keyword>
<keyword id="KW-0325">Glycoprotein</keyword>
<keyword id="KW-0413">Isomerase</keyword>
<keyword id="KW-0472">Membrane</keyword>
<keyword id="KW-0676">Redox-active center</keyword>
<keyword id="KW-1185">Reference proteome</keyword>
<keyword id="KW-0677">Repeat</keyword>
<keyword id="KW-0732">Signal</keyword>
<keyword id="KW-0812">Transmembrane</keyword>
<keyword id="KW-1133">Transmembrane helix</keyword>
<proteinExistence type="evidence at protein level"/>
<organism>
    <name type="scientific">Saccharomyces cerevisiae (strain ATCC 204508 / S288c)</name>
    <name type="common">Baker's yeast</name>
    <dbReference type="NCBI Taxonomy" id="559292"/>
    <lineage>
        <taxon>Eukaryota</taxon>
        <taxon>Fungi</taxon>
        <taxon>Dikarya</taxon>
        <taxon>Ascomycota</taxon>
        <taxon>Saccharomycotina</taxon>
        <taxon>Saccharomycetes</taxon>
        <taxon>Saccharomycetales</taxon>
        <taxon>Saccharomycetaceae</taxon>
        <taxon>Saccharomyces</taxon>
    </lineage>
</organism>
<comment type="function">
    <text evidence="3 4 6">Acts as a membrane-bound chaperone in endoplasmic reticulum quality control. Probably facilitates presentation of substrate to membrane-bound components of the degradation machinery.</text>
</comment>
<comment type="catalytic activity">
    <reaction>
        <text>Catalyzes the rearrangement of -S-S- bonds in proteins.</text>
        <dbReference type="EC" id="5.3.4.1"/>
    </reaction>
</comment>
<comment type="subunit">
    <text evidence="4 7">Interacts with mutated PMA1-D378N but not wild type PMA1. Interacts with EUG1, KAR2, MPD1 and PDI1.</text>
</comment>
<comment type="subcellular location">
    <subcellularLocation>
        <location evidence="3 4">Endoplasmic reticulum membrane</location>
        <topology evidence="3 4">Single-pass membrane protein</topology>
    </subcellularLocation>
</comment>
<comment type="miscellaneous">
    <text evidence="5">Present with 6020 molecules/cell in log phase SD medium.</text>
</comment>
<comment type="similarity">
    <text evidence="8">Belongs to the protein disulfide isomerase family.</text>
</comment>
<gene>
    <name type="primary">EPS1</name>
    <name type="ordered locus">YIL005W</name>
    <name type="ORF">YIA5W</name>
</gene>